<keyword id="KW-0067">ATP-binding</keyword>
<keyword id="KW-0418">Kinase</keyword>
<keyword id="KW-0545">Nucleotide biosynthesis</keyword>
<keyword id="KW-0547">Nucleotide-binding</keyword>
<keyword id="KW-0808">Transferase</keyword>
<accession>A9AV71</accession>
<feature type="chain" id="PRO_1000097404" description="Thymidylate kinase">
    <location>
        <begin position="1"/>
        <end position="236"/>
    </location>
</feature>
<feature type="binding site" evidence="1">
    <location>
        <begin position="9"/>
        <end position="16"/>
    </location>
    <ligand>
        <name>ATP</name>
        <dbReference type="ChEBI" id="CHEBI:30616"/>
    </ligand>
</feature>
<name>KTHY_HERA2</name>
<sequence length="236" mass="26606">MSLFITFEGPEGSGKSTQARYLKDYLQQAGYPVILTREPGGTPISDAVRRLVLDGQWTAMEPTTETLLFAAARAQLVGEVILPYLKLGGIVLCDRYADSTFAHQGYGLGRNLTELREITRFATGGLQPDLTFFLDLPVEQGLQRKRKQRDDFRESSQLALPLPHLPQPSPSQNEHWNRLDAREIAYHERVRSGYLEMIAADPQRWQVFDAGIERESLTEQLLLAVQPHLTTIKTLS</sequence>
<protein>
    <recommendedName>
        <fullName evidence="1">Thymidylate kinase</fullName>
        <ecNumber evidence="1">2.7.4.9</ecNumber>
    </recommendedName>
    <alternativeName>
        <fullName evidence="1">dTMP kinase</fullName>
    </alternativeName>
</protein>
<organism>
    <name type="scientific">Herpetosiphon aurantiacus (strain ATCC 23779 / DSM 785 / 114-95)</name>
    <dbReference type="NCBI Taxonomy" id="316274"/>
    <lineage>
        <taxon>Bacteria</taxon>
        <taxon>Bacillati</taxon>
        <taxon>Chloroflexota</taxon>
        <taxon>Chloroflexia</taxon>
        <taxon>Herpetosiphonales</taxon>
        <taxon>Herpetosiphonaceae</taxon>
        <taxon>Herpetosiphon</taxon>
    </lineage>
</organism>
<comment type="function">
    <text evidence="1">Phosphorylation of dTMP to form dTDP in both de novo and salvage pathways of dTTP synthesis.</text>
</comment>
<comment type="catalytic activity">
    <reaction evidence="1">
        <text>dTMP + ATP = dTDP + ADP</text>
        <dbReference type="Rhea" id="RHEA:13517"/>
        <dbReference type="ChEBI" id="CHEBI:30616"/>
        <dbReference type="ChEBI" id="CHEBI:58369"/>
        <dbReference type="ChEBI" id="CHEBI:63528"/>
        <dbReference type="ChEBI" id="CHEBI:456216"/>
        <dbReference type="EC" id="2.7.4.9"/>
    </reaction>
</comment>
<comment type="similarity">
    <text evidence="1">Belongs to the thymidylate kinase family.</text>
</comment>
<evidence type="ECO:0000255" key="1">
    <source>
        <dbReference type="HAMAP-Rule" id="MF_00165"/>
    </source>
</evidence>
<reference key="1">
    <citation type="journal article" date="2011" name="Stand. Genomic Sci.">
        <title>Complete genome sequence of the filamentous gliding predatory bacterium Herpetosiphon aurantiacus type strain (114-95(T)).</title>
        <authorList>
            <person name="Kiss H."/>
            <person name="Nett M."/>
            <person name="Domin N."/>
            <person name="Martin K."/>
            <person name="Maresca J.A."/>
            <person name="Copeland A."/>
            <person name="Lapidus A."/>
            <person name="Lucas S."/>
            <person name="Berry K.W."/>
            <person name="Glavina Del Rio T."/>
            <person name="Dalin E."/>
            <person name="Tice H."/>
            <person name="Pitluck S."/>
            <person name="Richardson P."/>
            <person name="Bruce D."/>
            <person name="Goodwin L."/>
            <person name="Han C."/>
            <person name="Detter J.C."/>
            <person name="Schmutz J."/>
            <person name="Brettin T."/>
            <person name="Land M."/>
            <person name="Hauser L."/>
            <person name="Kyrpides N.C."/>
            <person name="Ivanova N."/>
            <person name="Goeker M."/>
            <person name="Woyke T."/>
            <person name="Klenk H.P."/>
            <person name="Bryant D.A."/>
        </authorList>
    </citation>
    <scope>NUCLEOTIDE SEQUENCE [LARGE SCALE GENOMIC DNA]</scope>
    <source>
        <strain>ATCC 23779 / DSM 785 / 114-95</strain>
    </source>
</reference>
<dbReference type="EC" id="2.7.4.9" evidence="1"/>
<dbReference type="EMBL" id="CP000875">
    <property type="protein sequence ID" value="ABX03149.1"/>
    <property type="molecule type" value="Genomic_DNA"/>
</dbReference>
<dbReference type="SMR" id="A9AV71"/>
<dbReference type="FunCoup" id="A9AV71">
    <property type="interactions" value="346"/>
</dbReference>
<dbReference type="STRING" id="316274.Haur_0498"/>
<dbReference type="KEGG" id="hau:Haur_0498"/>
<dbReference type="eggNOG" id="COG0125">
    <property type="taxonomic scope" value="Bacteria"/>
</dbReference>
<dbReference type="HOGENOM" id="CLU_049131_0_2_0"/>
<dbReference type="InParanoid" id="A9AV71"/>
<dbReference type="Proteomes" id="UP000000787">
    <property type="component" value="Chromosome"/>
</dbReference>
<dbReference type="GO" id="GO:0005829">
    <property type="term" value="C:cytosol"/>
    <property type="evidence" value="ECO:0007669"/>
    <property type="project" value="TreeGrafter"/>
</dbReference>
<dbReference type="GO" id="GO:0005524">
    <property type="term" value="F:ATP binding"/>
    <property type="evidence" value="ECO:0007669"/>
    <property type="project" value="UniProtKB-UniRule"/>
</dbReference>
<dbReference type="GO" id="GO:0004798">
    <property type="term" value="F:dTMP kinase activity"/>
    <property type="evidence" value="ECO:0007669"/>
    <property type="project" value="UniProtKB-UniRule"/>
</dbReference>
<dbReference type="GO" id="GO:0006233">
    <property type="term" value="P:dTDP biosynthetic process"/>
    <property type="evidence" value="ECO:0007669"/>
    <property type="project" value="InterPro"/>
</dbReference>
<dbReference type="GO" id="GO:0006235">
    <property type="term" value="P:dTTP biosynthetic process"/>
    <property type="evidence" value="ECO:0007669"/>
    <property type="project" value="UniProtKB-UniRule"/>
</dbReference>
<dbReference type="GO" id="GO:0006227">
    <property type="term" value="P:dUDP biosynthetic process"/>
    <property type="evidence" value="ECO:0007669"/>
    <property type="project" value="TreeGrafter"/>
</dbReference>
<dbReference type="CDD" id="cd01672">
    <property type="entry name" value="TMPK"/>
    <property type="match status" value="1"/>
</dbReference>
<dbReference type="FunFam" id="3.40.50.300:FF:000225">
    <property type="entry name" value="Thymidylate kinase"/>
    <property type="match status" value="1"/>
</dbReference>
<dbReference type="Gene3D" id="3.40.50.300">
    <property type="entry name" value="P-loop containing nucleotide triphosphate hydrolases"/>
    <property type="match status" value="1"/>
</dbReference>
<dbReference type="HAMAP" id="MF_00165">
    <property type="entry name" value="Thymidylate_kinase"/>
    <property type="match status" value="1"/>
</dbReference>
<dbReference type="InterPro" id="IPR027417">
    <property type="entry name" value="P-loop_NTPase"/>
</dbReference>
<dbReference type="InterPro" id="IPR039430">
    <property type="entry name" value="Thymidylate_kin-like_dom"/>
</dbReference>
<dbReference type="InterPro" id="IPR018094">
    <property type="entry name" value="Thymidylate_kinase"/>
</dbReference>
<dbReference type="NCBIfam" id="TIGR00041">
    <property type="entry name" value="DTMP_kinase"/>
    <property type="match status" value="1"/>
</dbReference>
<dbReference type="PANTHER" id="PTHR10344">
    <property type="entry name" value="THYMIDYLATE KINASE"/>
    <property type="match status" value="1"/>
</dbReference>
<dbReference type="PANTHER" id="PTHR10344:SF4">
    <property type="entry name" value="UMP-CMP KINASE 2, MITOCHONDRIAL"/>
    <property type="match status" value="1"/>
</dbReference>
<dbReference type="Pfam" id="PF02223">
    <property type="entry name" value="Thymidylate_kin"/>
    <property type="match status" value="1"/>
</dbReference>
<dbReference type="SUPFAM" id="SSF52540">
    <property type="entry name" value="P-loop containing nucleoside triphosphate hydrolases"/>
    <property type="match status" value="1"/>
</dbReference>
<proteinExistence type="inferred from homology"/>
<gene>
    <name evidence="1" type="primary">tmk</name>
    <name type="ordered locus">Haur_0498</name>
</gene>